<gene>
    <name evidence="8" type="primary">GSC2</name>
    <name type="synonym">FKS2</name>
    <name type="synonym">GLS2</name>
    <name type="ordered locus">YGR032W</name>
</gene>
<keyword id="KW-0961">Cell wall biogenesis/degradation</keyword>
<keyword id="KW-0903">Direct protein sequencing</keyword>
<keyword id="KW-0328">Glycosyltransferase</keyword>
<keyword id="KW-1017">Isopeptide bond</keyword>
<keyword id="KW-0472">Membrane</keyword>
<keyword id="KW-0597">Phosphoprotein</keyword>
<keyword id="KW-1185">Reference proteome</keyword>
<keyword id="KW-0749">Sporulation</keyword>
<keyword id="KW-0808">Transferase</keyword>
<keyword id="KW-0812">Transmembrane</keyword>
<keyword id="KW-1133">Transmembrane helix</keyword>
<keyword id="KW-0832">Ubl conjugation</keyword>
<dbReference type="EC" id="2.4.1.34" evidence="4 6"/>
<dbReference type="EMBL" id="D42127">
    <property type="protein sequence ID" value="BAA07707.1"/>
    <property type="molecule type" value="Genomic_DNA"/>
</dbReference>
<dbReference type="EMBL" id="U16783">
    <property type="protein sequence ID" value="AAA85676.1"/>
    <property type="molecule type" value="Genomic_DNA"/>
</dbReference>
<dbReference type="EMBL" id="DQ115390">
    <property type="protein sequence ID" value="AAZ22447.1"/>
    <property type="molecule type" value="Genomic_DNA"/>
</dbReference>
<dbReference type="EMBL" id="Z72817">
    <property type="protein sequence ID" value="CAA97020.1"/>
    <property type="molecule type" value="Genomic_DNA"/>
</dbReference>
<dbReference type="EMBL" id="BK006941">
    <property type="protein sequence ID" value="DAA08129.1"/>
    <property type="molecule type" value="Genomic_DNA"/>
</dbReference>
<dbReference type="PIR" id="S50240">
    <property type="entry name" value="S50240"/>
</dbReference>
<dbReference type="RefSeq" id="NP_011546.3">
    <property type="nucleotide sequence ID" value="NM_001181161.3"/>
</dbReference>
<dbReference type="SMR" id="P40989"/>
<dbReference type="BioGRID" id="33277">
    <property type="interactions" value="121"/>
</dbReference>
<dbReference type="ComplexPortal" id="CPX-1813">
    <property type="entry name" value="1,3-beta-D-glucan synthase complex, FKS2-RHO1 variant"/>
</dbReference>
<dbReference type="DIP" id="DIP-2511N"/>
<dbReference type="FunCoup" id="P40989">
    <property type="interactions" value="345"/>
</dbReference>
<dbReference type="IntAct" id="P40989">
    <property type="interactions" value="28"/>
</dbReference>
<dbReference type="MINT" id="P40989"/>
<dbReference type="STRING" id="4932.YGR032W"/>
<dbReference type="BindingDB" id="P40989"/>
<dbReference type="ChEMBL" id="CHEMBL3134"/>
<dbReference type="DrugBank" id="DB00362">
    <property type="generic name" value="Anidulafungin"/>
</dbReference>
<dbReference type="DrugBank" id="DB00520">
    <property type="generic name" value="Caspofungin"/>
</dbReference>
<dbReference type="DrugBank" id="DB12471">
    <property type="generic name" value="Ibrexafungerp"/>
</dbReference>
<dbReference type="DrugBank" id="DB01141">
    <property type="generic name" value="Micafungin"/>
</dbReference>
<dbReference type="DrugBank" id="DB16310">
    <property type="generic name" value="Rezafungin"/>
</dbReference>
<dbReference type="CAZy" id="GT48">
    <property type="family name" value="Glycosyltransferase Family 48"/>
</dbReference>
<dbReference type="iPTMnet" id="P40989"/>
<dbReference type="PaxDb" id="4932-YGR032W"/>
<dbReference type="PeptideAtlas" id="P40989"/>
<dbReference type="TopDownProteomics" id="P40989"/>
<dbReference type="EnsemblFungi" id="YGR032W_mRNA">
    <property type="protein sequence ID" value="YGR032W"/>
    <property type="gene ID" value="YGR032W"/>
</dbReference>
<dbReference type="GeneID" id="852920"/>
<dbReference type="KEGG" id="sce:YGR032W"/>
<dbReference type="AGR" id="SGD:S000003264"/>
<dbReference type="SGD" id="S000003264">
    <property type="gene designation" value="GSC2"/>
</dbReference>
<dbReference type="VEuPathDB" id="FungiDB:YGR032W"/>
<dbReference type="eggNOG" id="KOG0916">
    <property type="taxonomic scope" value="Eukaryota"/>
</dbReference>
<dbReference type="GeneTree" id="ENSGT00940000176776"/>
<dbReference type="HOGENOM" id="CLU_000844_0_1_1"/>
<dbReference type="InParanoid" id="P40989"/>
<dbReference type="OMA" id="AWTDFFI"/>
<dbReference type="OrthoDB" id="1880850at2759"/>
<dbReference type="BioCyc" id="YEAST:YGR032W-MONOMER"/>
<dbReference type="BRENDA" id="2.4.1.34">
    <property type="organism ID" value="984"/>
</dbReference>
<dbReference type="BioGRID-ORCS" id="852920">
    <property type="hits" value="1 hit in 10 CRISPR screens"/>
</dbReference>
<dbReference type="PRO" id="PR:P40989"/>
<dbReference type="Proteomes" id="UP000002311">
    <property type="component" value="Chromosome VII"/>
</dbReference>
<dbReference type="RNAct" id="P40989">
    <property type="molecule type" value="protein"/>
</dbReference>
<dbReference type="GO" id="GO:0000148">
    <property type="term" value="C:1,3-beta-D-glucan synthase complex"/>
    <property type="evidence" value="ECO:0000314"/>
    <property type="project" value="SGD"/>
</dbReference>
<dbReference type="GO" id="GO:0071944">
    <property type="term" value="C:cell periphery"/>
    <property type="evidence" value="ECO:0007005"/>
    <property type="project" value="SGD"/>
</dbReference>
<dbReference type="GO" id="GO:0005935">
    <property type="term" value="C:cellular bud neck"/>
    <property type="evidence" value="ECO:0007005"/>
    <property type="project" value="SGD"/>
</dbReference>
<dbReference type="GO" id="GO:0016020">
    <property type="term" value="C:membrane"/>
    <property type="evidence" value="ECO:0000303"/>
    <property type="project" value="ComplexPortal"/>
</dbReference>
<dbReference type="GO" id="GO:0005886">
    <property type="term" value="C:plasma membrane"/>
    <property type="evidence" value="ECO:0000318"/>
    <property type="project" value="GO_Central"/>
</dbReference>
<dbReference type="GO" id="GO:0005628">
    <property type="term" value="C:prospore membrane"/>
    <property type="evidence" value="ECO:0000314"/>
    <property type="project" value="SGD"/>
</dbReference>
<dbReference type="GO" id="GO:0003843">
    <property type="term" value="F:1,3-beta-D-glucan synthase activity"/>
    <property type="evidence" value="ECO:0000314"/>
    <property type="project" value="SGD"/>
</dbReference>
<dbReference type="GO" id="GO:0006075">
    <property type="term" value="P:(1-&gt;3)-beta-D-glucan biosynthetic process"/>
    <property type="evidence" value="ECO:0000314"/>
    <property type="project" value="SGD"/>
</dbReference>
<dbReference type="GO" id="GO:0030476">
    <property type="term" value="P:ascospore wall assembly"/>
    <property type="evidence" value="ECO:0000315"/>
    <property type="project" value="SGD"/>
</dbReference>
<dbReference type="GO" id="GO:0051278">
    <property type="term" value="P:fungal-type cell wall polysaccharide biosynthetic process"/>
    <property type="evidence" value="ECO:0000318"/>
    <property type="project" value="GO_Central"/>
</dbReference>
<dbReference type="InterPro" id="IPR026899">
    <property type="entry name" value="FKS1-like_dom1"/>
</dbReference>
<dbReference type="InterPro" id="IPR056261">
    <property type="entry name" value="FKS1-like_dom2"/>
</dbReference>
<dbReference type="InterPro" id="IPR003440">
    <property type="entry name" value="Glyco_trans_48_dom"/>
</dbReference>
<dbReference type="PANTHER" id="PTHR12741:SF48">
    <property type="entry name" value="1,3-BETA-GLUCAN SYNTHASE COMPONENT FKS1-RELATED"/>
    <property type="match status" value="1"/>
</dbReference>
<dbReference type="PANTHER" id="PTHR12741">
    <property type="entry name" value="LYST-INTERACTING PROTEIN LIP5 DOPAMINE RESPONSIVE PROTEIN DRG-1"/>
    <property type="match status" value="1"/>
</dbReference>
<dbReference type="Pfam" id="PF14288">
    <property type="entry name" value="FKS1_dom1"/>
    <property type="match status" value="1"/>
</dbReference>
<dbReference type="Pfam" id="PF23605">
    <property type="entry name" value="FKS1_dom2"/>
    <property type="match status" value="1"/>
</dbReference>
<dbReference type="Pfam" id="PF02364">
    <property type="entry name" value="Glucan_synthase"/>
    <property type="match status" value="1"/>
</dbReference>
<dbReference type="SMART" id="SM01205">
    <property type="entry name" value="FKS1_dom1"/>
    <property type="match status" value="1"/>
</dbReference>
<evidence type="ECO:0000250" key="1">
    <source>
        <dbReference type="UniProtKB" id="P38631"/>
    </source>
</evidence>
<evidence type="ECO:0000255" key="2"/>
<evidence type="ECO:0000256" key="3">
    <source>
        <dbReference type="SAM" id="MobiDB-lite"/>
    </source>
</evidence>
<evidence type="ECO:0000269" key="4">
    <source>
    </source>
</evidence>
<evidence type="ECO:0000269" key="5">
    <source>
    </source>
</evidence>
<evidence type="ECO:0000269" key="6">
    <source>
    </source>
</evidence>
<evidence type="ECO:0000269" key="7">
    <source>
    </source>
</evidence>
<evidence type="ECO:0000303" key="8">
    <source>
    </source>
</evidence>
<evidence type="ECO:0000305" key="9"/>
<comment type="function">
    <text evidence="6 7">Alternate catalytic subunit of the 1,3-beta-glucan synthase (GS) complex. Synthesizes 1,3-beta-glucan, a major structural component of the yeast cell wall. Required for spore wall assembly. Negative regulation of activity by SMK1 is important for spore wall deposition. Activity is positively regulated by RHO1.</text>
</comment>
<comment type="catalytic activity">
    <reaction evidence="4 6">
        <text>[(1-&gt;3)-beta-D-glucosyl](n) + UDP-alpha-D-glucose = [(1-&gt;3)-beta-D-glucosyl](n+1) + UDP + H(+)</text>
        <dbReference type="Rhea" id="RHEA:21476"/>
        <dbReference type="Rhea" id="RHEA-COMP:11146"/>
        <dbReference type="Rhea" id="RHEA-COMP:14303"/>
        <dbReference type="ChEBI" id="CHEBI:15378"/>
        <dbReference type="ChEBI" id="CHEBI:37671"/>
        <dbReference type="ChEBI" id="CHEBI:58223"/>
        <dbReference type="ChEBI" id="CHEBI:58885"/>
        <dbReference type="EC" id="2.4.1.34"/>
    </reaction>
</comment>
<comment type="subunit">
    <text evidence="4">Component of the 1,3-beta-glucan synthase (GS) complex, composed of two alternate catalytic subunits FKS1 or GSC2, and a regulatory subunit RHO1. Interacts with SMK1.</text>
</comment>
<comment type="subcellular location">
    <subcellularLocation>
        <location evidence="7">Membrane</location>
        <topology evidence="7">Multi-pass membrane protein</topology>
    </subcellularLocation>
</comment>
<comment type="induction">
    <text evidence="7">Under starvation and during sporulation. Also by pheromones and calcium in a calcineurin-dependent manner.</text>
</comment>
<comment type="miscellaneous">
    <text>Deletion leads to caspofungin resistance.</text>
</comment>
<comment type="similarity">
    <text evidence="9">Belongs to the glycosyltransferase 48 family.</text>
</comment>
<organism>
    <name type="scientific">Saccharomyces cerevisiae (strain ATCC 204508 / S288c)</name>
    <name type="common">Baker's yeast</name>
    <dbReference type="NCBI Taxonomy" id="559292"/>
    <lineage>
        <taxon>Eukaryota</taxon>
        <taxon>Fungi</taxon>
        <taxon>Dikarya</taxon>
        <taxon>Ascomycota</taxon>
        <taxon>Saccharomycotina</taxon>
        <taxon>Saccharomycetes</taxon>
        <taxon>Saccharomycetales</taxon>
        <taxon>Saccharomycetaceae</taxon>
        <taxon>Saccharomyces</taxon>
    </lineage>
</organism>
<name>FKS2_YEAST</name>
<accession>P40989</accession>
<accession>D6VUG8</accession>
<accession>Q45U52</accession>
<feature type="chain" id="PRO_0000121726" description="1,3-beta-glucan synthase component GSC2">
    <location>
        <begin position="1"/>
        <end position="1895"/>
    </location>
</feature>
<feature type="topological domain" description="Extracellular" evidence="2">
    <location>
        <begin position="1"/>
        <end position="473"/>
    </location>
</feature>
<feature type="transmembrane region" description="Helical" evidence="2">
    <location>
        <begin position="474"/>
        <end position="494"/>
    </location>
</feature>
<feature type="topological domain" description="Cytoplasmic" evidence="2">
    <location>
        <begin position="495"/>
        <end position="511"/>
    </location>
</feature>
<feature type="transmembrane region" description="Helical" evidence="2">
    <location>
        <begin position="512"/>
        <end position="532"/>
    </location>
</feature>
<feature type="topological domain" description="Extracellular" evidence="2">
    <location>
        <begin position="533"/>
        <end position="550"/>
    </location>
</feature>
<feature type="transmembrane region" description="Helical" evidence="2">
    <location>
        <begin position="551"/>
        <end position="571"/>
    </location>
</feature>
<feature type="topological domain" description="Cytoplasmic" evidence="2">
    <location>
        <begin position="572"/>
        <end position="582"/>
    </location>
</feature>
<feature type="transmembrane region" description="Helical" evidence="2">
    <location>
        <begin position="583"/>
        <end position="603"/>
    </location>
</feature>
<feature type="topological domain" description="Extracellular" evidence="2">
    <location>
        <begin position="604"/>
        <end position="1579"/>
    </location>
</feature>
<feature type="transmembrane region" description="Helical" evidence="2">
    <location>
        <begin position="1580"/>
        <end position="1600"/>
    </location>
</feature>
<feature type="topological domain" description="Cytoplasmic" evidence="2">
    <location>
        <begin position="1601"/>
        <end position="1620"/>
    </location>
</feature>
<feature type="transmembrane region" description="Helical" evidence="2">
    <location>
        <begin position="1621"/>
        <end position="1641"/>
    </location>
</feature>
<feature type="topological domain" description="Extracellular" evidence="2">
    <location>
        <begin position="1642"/>
        <end position="1758"/>
    </location>
</feature>
<feature type="transmembrane region" description="Helical" evidence="2">
    <location>
        <begin position="1759"/>
        <end position="1779"/>
    </location>
</feature>
<feature type="topological domain" description="Cytoplasmic" evidence="2">
    <location>
        <begin position="1780"/>
        <end position="1821"/>
    </location>
</feature>
<feature type="transmembrane region" description="Helical" evidence="2">
    <location>
        <begin position="1822"/>
        <end position="1842"/>
    </location>
</feature>
<feature type="topological domain" description="Extracellular" evidence="2">
    <location>
        <begin position="1843"/>
        <end position="1895"/>
    </location>
</feature>
<feature type="region of interest" description="Disordered" evidence="3">
    <location>
        <begin position="1"/>
        <end position="143"/>
    </location>
</feature>
<feature type="region of interest" description="Disordered" evidence="3">
    <location>
        <begin position="269"/>
        <end position="292"/>
    </location>
</feature>
<feature type="compositionally biased region" description="Polar residues" evidence="3">
    <location>
        <begin position="1"/>
        <end position="16"/>
    </location>
</feature>
<feature type="compositionally biased region" description="Polar residues" evidence="3">
    <location>
        <begin position="25"/>
        <end position="34"/>
    </location>
</feature>
<feature type="compositionally biased region" description="Low complexity" evidence="3">
    <location>
        <begin position="65"/>
        <end position="78"/>
    </location>
</feature>
<feature type="compositionally biased region" description="Polar residues" evidence="3">
    <location>
        <begin position="79"/>
        <end position="107"/>
    </location>
</feature>
<feature type="compositionally biased region" description="Polar residues" evidence="3">
    <location>
        <begin position="115"/>
        <end position="141"/>
    </location>
</feature>
<feature type="compositionally biased region" description="Basic residues" evidence="3">
    <location>
        <begin position="269"/>
        <end position="278"/>
    </location>
</feature>
<feature type="modified residue" description="Phosphothreonine" evidence="1">
    <location>
        <position position="288"/>
    </location>
</feature>
<feature type="modified residue" description="Phosphothreonine" evidence="1">
    <location>
        <position position="291"/>
    </location>
</feature>
<feature type="cross-link" description="Glycyl lysine isopeptide (Lys-Gly) (interchain with G-Cter in ubiquitin)" evidence="1">
    <location>
        <position position="278"/>
    </location>
</feature>
<feature type="cross-link" description="Glycyl lysine isopeptide (Lys-Gly) (interchain with G-Cter in ubiquitin)" evidence="1">
    <location>
        <position position="405"/>
    </location>
</feature>
<feature type="cross-link" description="Glycyl lysine isopeptide (Lys-Gly) (interchain with G-Cter in ubiquitin)" evidence="1">
    <location>
        <position position="929"/>
    </location>
</feature>
<feature type="cross-link" description="Glycyl lysine isopeptide (Lys-Gly) (interchain with G-Cter in ubiquitin)" evidence="1">
    <location>
        <position position="934"/>
    </location>
</feature>
<feature type="cross-link" description="Glycyl lysine isopeptide (Lys-Gly) (interchain with G-Cter in ubiquitin)" evidence="1">
    <location>
        <position position="1558"/>
    </location>
</feature>
<feature type="cross-link" description="Glycyl lysine isopeptide (Lys-Gly) (interchain with G-Cter in ubiquitin)" evidence="1">
    <location>
        <position position="1566"/>
    </location>
</feature>
<feature type="sequence variant" description="In strain: SK1." evidence="5">
    <original>N</original>
    <variation>S</variation>
    <location>
        <position position="1059"/>
    </location>
</feature>
<feature type="sequence variant" description="In strain: SK1." evidence="5">
    <original>TG</original>
    <variation>KD</variation>
    <location>
        <begin position="1853"/>
        <end position="1854"/>
    </location>
</feature>
<feature type="sequence conflict" description="In Ref. 1; BAA07707." evidence="9" ref="1">
    <original>A</original>
    <variation>T</variation>
    <location>
        <position position="137"/>
    </location>
</feature>
<feature type="sequence conflict" description="In Ref. 1; BAA07707." evidence="9" ref="1">
    <original>K</original>
    <variation>E</variation>
    <location>
        <position position="261"/>
    </location>
</feature>
<feature type="sequence conflict" description="In Ref. 1; BAA07707." evidence="9" ref="1">
    <original>K</original>
    <variation>R</variation>
    <location>
        <position position="275"/>
    </location>
</feature>
<sequence length="1895" mass="216990">MSYNDPNLNGQYYSNGDGTGDGNYPTYQVTQDQSAYDEYGQPIYTQNQLDDGYYDPNEQYVDGTQFPQGQDPSQDQGPYNNDASYYNQPPNMMNPSSQDGENFSDFSSYGPPSGTYPNDQYTPSQMSYPDQDGSSGASTPYGNGVVNGNGQYYDPNAIEMALPNDPYPAWTADPQSPLPIEQIEDIFIDLTNKFGFQRDSMRNMFDHFMTLLDSRSSRMSPEQALLSLHADYIGGDTANYKKWYFAAQLDMDDEIGFRNMKLGKLSRKARKAKKKNKKAMQEASPEDTEETLNQIEGDNSLEAADFRWKSKMNQLSPFEMVRQIALFLLCWGEANQVRFTPECLCFIYKCASDYLDSAQCQQRPDPLPEGDFLNRVITPLYRFIRSQVYEIVDGRYVKSEKDHNKVIGYDDVNQLFWYPEGIAKIVMEDGTRLIDLPAEERYLKLGEIPWDDVFFKTYKETRSWLHLVTNFNRIWIMHISVYWMYCAYNAPTFYTHNYQQLVDNQPLAAYKWATAALGGTVASLIQVAATLCEWSFVPRKWAGAQHLSRRFWFLCVIMGINLGPVIFVFAYDKDTVYSTAAHVVGAVMFFVAVATLVFFSVMPLGGLFTSYMKKSTRSYVASQTFTASFAPLHGLDRWMSYLVWVTVFAAKYAESYFFLILSLRDPIRILSTTSMRCTGEYWWGNKICKVQPKIVLGLMIATDFILFFLDTYLWYIVVNTVFSVGKSFYLGISILTPWRNIFTRLPKRIYSKILATTDMEIKYKPKVLISQIWNAIIISMYREHLLAIDHVQKLLYHQVPSEIEGKRTLRAPTFFVSQDDNNFETEFFPRDSEAERRISFFAQSLSTPIPEPLPVDNMPTFTVLTPHYAERILLSLREIIREDDQFSRVTLLEYLKQLHPVEWDCFVKDTKILAEETAAYENNEDEPEKEDALKSQIDDLPFYCIGFKSAAPEYTLRTRIWASLRSQTLYRTISGFMNYSRAIKLLYRVENPEIVQMFGGNADGLERELEKMARRKFKFLVSMQRLAKFKPHELENAEFLLRAYPDLQIAYLDEEPPLNEGEEPRIYSALIDGHCEILENGRRRPKFRVQLSGNPILGDGKSDNQNHALIFYRGEYIQLIDANQDNYLEECLKIRSVLAEFEELGIEQIHPYTPGLKYEDQSTNHPVAIVGAREYIFSENSGVLGDVAAGKEQTFGTLFARTLAQIGGKLHYGHPDFINATFMTTRGGVSKAQKGLHLNEDIYAGMNAVLRGGRIKHCEYYQCGKGRDLGFGTILNFTTKIGAGMGEQMLSREYYYLGTQLPIDRFLTFYYAHPGFHLNNLFIQLSLQMFMLTLVNLHALAHESILCVYDRDKPITDVLYPIGCYNFHPAIDWVRRYTLSIFIVFWIAFVPIVVQELIERGLWKATQRFFRHILSLSPMFEVFAGQIYSSALLSDIAVGGARYISTGRGFATSRIPFSILYSRFAGSAIYMGSRSMLMLLFGTVAHWQAPLLWFWASLSALIFAPFIFNPHQFAWEDFFLDYRDYIRWLSRGNNKYHRNSWIGYVRMSRSRVTGFKRKLVGDESEKSAGDASRAHRTNLIMAEIIPCAIYAAGCFIAFTFINAQTGVKTTDEDRVNSTLRIIICTLAPIVIDIGVLFFCMGLSCCSGPLLGMCCKKTGSVMAGIAHGIAVVVHIVFFIVMWVLEGFSFVRMLIGVVTCIQCQRLIFHCMTVLLLTREFKNDHANTAFWTGKWYSTGLGYMAWTQPTRELTAKVIELSEFAADFVLGHVILIFQLPVICIPKIDKFHSIMLFWLKPSRQIRPPIYSLKQARLRKRMVRRYCSLYFLVLIIFAGCIVGPAVASAHVPKDLGSGLTGTFHNLVQPRNVSNNDTGSQMSTYKSHYYTHTPSLKTWSTIK</sequence>
<reference key="1">
    <citation type="journal article" date="1995" name="Eur. J. Biochem.">
        <title>Characterization and gene cloning of 1,3-beta-D-glucan synthase from Saccharomyces cerevisiae.</title>
        <authorList>
            <person name="Inoue S.B."/>
            <person name="Takewaki N."/>
            <person name="Takasuka T."/>
            <person name="Mio T."/>
            <person name="Adachi M."/>
            <person name="Fujii Y."/>
            <person name="Miyamoto C."/>
            <person name="Arisawa M."/>
            <person name="Furuichi Y."/>
            <person name="Watanabe T."/>
        </authorList>
    </citation>
    <scope>NUCLEOTIDE SEQUENCE [GENOMIC DNA]</scope>
    <scope>PROTEIN SEQUENCE OF 295-309; 406-424 AND 935-948</scope>
    <source>
        <strain>ATCC 200589 / A451</strain>
    </source>
</reference>
<reference key="2">
    <citation type="journal article" date="1995" name="Mol. Cell. Biol.">
        <title>Differential expression and function of two homologous subunits of yeast 1,3-beta-D-glucan synthase.</title>
        <authorList>
            <person name="Mazur P."/>
            <person name="Morin N."/>
            <person name="Baginsky W."/>
            <person name="el-Sherbeini M."/>
            <person name="Clemas J.A."/>
            <person name="Nielsen J.B."/>
            <person name="Foor F."/>
        </authorList>
    </citation>
    <scope>NUCLEOTIDE SEQUENCE [GENOMIC DNA]</scope>
    <scope>FUNCTION</scope>
    <scope>SUBCELLULAR LOCATION</scope>
    <scope>INDUCTION</scope>
    <scope>TOPOLOGY</scope>
    <source>
        <strain>ATCC 204508 / S288c</strain>
    </source>
</reference>
<reference key="3">
    <citation type="journal article" date="2005" name="Nat. Genet.">
        <title>Quantitative trait loci mapped to single-nucleotide resolution in yeast.</title>
        <authorList>
            <person name="Deutschbauer A.M."/>
            <person name="Davis R.W."/>
        </authorList>
    </citation>
    <scope>NUCLEOTIDE SEQUENCE [GENOMIC DNA]</scope>
    <scope>VARIANTS SER-1059 AND 1853-THR-GLY-1854 DELINS LYS-ASP</scope>
    <source>
        <strain>SK1</strain>
    </source>
</reference>
<reference key="4">
    <citation type="journal article" date="1997" name="Yeast">
        <title>Sequence analysis of 203 kilobases from Saccharomyces cerevisiae chromosome VII.</title>
        <authorList>
            <person name="Rieger M."/>
            <person name="Brueckner M."/>
            <person name="Schaefer M."/>
            <person name="Mueller-Auer S."/>
        </authorList>
    </citation>
    <scope>NUCLEOTIDE SEQUENCE [GENOMIC DNA]</scope>
    <source>
        <strain>ATCC 204508 / S288c</strain>
    </source>
</reference>
<reference key="5">
    <citation type="journal article" date="1997" name="Nature">
        <title>The nucleotide sequence of Saccharomyces cerevisiae chromosome VII.</title>
        <authorList>
            <person name="Tettelin H."/>
            <person name="Agostoni-Carbone M.L."/>
            <person name="Albermann K."/>
            <person name="Albers M."/>
            <person name="Arroyo J."/>
            <person name="Backes U."/>
            <person name="Barreiros T."/>
            <person name="Bertani I."/>
            <person name="Bjourson A.J."/>
            <person name="Brueckner M."/>
            <person name="Bruschi C.V."/>
            <person name="Carignani G."/>
            <person name="Castagnoli L."/>
            <person name="Cerdan E."/>
            <person name="Clemente M.L."/>
            <person name="Coblenz A."/>
            <person name="Coglievina M."/>
            <person name="Coissac E."/>
            <person name="Defoor E."/>
            <person name="Del Bino S."/>
            <person name="Delius H."/>
            <person name="Delneri D."/>
            <person name="de Wergifosse P."/>
            <person name="Dujon B."/>
            <person name="Durand P."/>
            <person name="Entian K.-D."/>
            <person name="Eraso P."/>
            <person name="Escribano V."/>
            <person name="Fabiani L."/>
            <person name="Fartmann B."/>
            <person name="Feroli F."/>
            <person name="Feuermann M."/>
            <person name="Frontali L."/>
            <person name="Garcia-Gonzalez M."/>
            <person name="Garcia-Saez M.I."/>
            <person name="Goffeau A."/>
            <person name="Guerreiro P."/>
            <person name="Hani J."/>
            <person name="Hansen M."/>
            <person name="Hebling U."/>
            <person name="Hernandez K."/>
            <person name="Heumann K."/>
            <person name="Hilger F."/>
            <person name="Hofmann B."/>
            <person name="Indge K.J."/>
            <person name="James C.M."/>
            <person name="Klima R."/>
            <person name="Koetter P."/>
            <person name="Kramer B."/>
            <person name="Kramer W."/>
            <person name="Lauquin G."/>
            <person name="Leuther H."/>
            <person name="Louis E.J."/>
            <person name="Maillier E."/>
            <person name="Marconi A."/>
            <person name="Martegani E."/>
            <person name="Mazon M.J."/>
            <person name="Mazzoni C."/>
            <person name="McReynolds A.D.K."/>
            <person name="Melchioretto P."/>
            <person name="Mewes H.-W."/>
            <person name="Minenkova O."/>
            <person name="Mueller-Auer S."/>
            <person name="Nawrocki A."/>
            <person name="Netter P."/>
            <person name="Neu R."/>
            <person name="Nombela C."/>
            <person name="Oliver S.G."/>
            <person name="Panzeri L."/>
            <person name="Paoluzi S."/>
            <person name="Plevani P."/>
            <person name="Portetelle D."/>
            <person name="Portillo F."/>
            <person name="Potier S."/>
            <person name="Purnelle B."/>
            <person name="Rieger M."/>
            <person name="Riles L."/>
            <person name="Rinaldi T."/>
            <person name="Robben J."/>
            <person name="Rodrigues-Pousada C."/>
            <person name="Rodriguez-Belmonte E."/>
            <person name="Rodriguez-Torres A.M."/>
            <person name="Rose M."/>
            <person name="Ruzzi M."/>
            <person name="Saliola M."/>
            <person name="Sanchez-Perez M."/>
            <person name="Schaefer B."/>
            <person name="Schaefer M."/>
            <person name="Scharfe M."/>
            <person name="Schmidheini T."/>
            <person name="Schreer A."/>
            <person name="Skala J."/>
            <person name="Souciet J.-L."/>
            <person name="Steensma H.Y."/>
            <person name="Talla E."/>
            <person name="Thierry A."/>
            <person name="Vandenbol M."/>
            <person name="van der Aart Q.J.M."/>
            <person name="Van Dyck L."/>
            <person name="Vanoni M."/>
            <person name="Verhasselt P."/>
            <person name="Voet M."/>
            <person name="Volckaert G."/>
            <person name="Wambutt R."/>
            <person name="Watson M.D."/>
            <person name="Weber N."/>
            <person name="Wedler E."/>
            <person name="Wedler H."/>
            <person name="Wipfli P."/>
            <person name="Wolf K."/>
            <person name="Wright L.F."/>
            <person name="Zaccaria P."/>
            <person name="Zimmermann M."/>
            <person name="Zollner A."/>
            <person name="Kleine K."/>
        </authorList>
    </citation>
    <scope>NUCLEOTIDE SEQUENCE [LARGE SCALE GENOMIC DNA]</scope>
    <source>
        <strain>ATCC 204508 / S288c</strain>
    </source>
</reference>
<reference key="6">
    <citation type="journal article" date="2014" name="G3 (Bethesda)">
        <title>The reference genome sequence of Saccharomyces cerevisiae: Then and now.</title>
        <authorList>
            <person name="Engel S.R."/>
            <person name="Dietrich F.S."/>
            <person name="Fisk D.G."/>
            <person name="Binkley G."/>
            <person name="Balakrishnan R."/>
            <person name="Costanzo M.C."/>
            <person name="Dwight S.S."/>
            <person name="Hitz B.C."/>
            <person name="Karra K."/>
            <person name="Nash R.S."/>
            <person name="Weng S."/>
            <person name="Wong E.D."/>
            <person name="Lloyd P."/>
            <person name="Skrzypek M.S."/>
            <person name="Miyasato S.R."/>
            <person name="Simison M."/>
            <person name="Cherry J.M."/>
        </authorList>
    </citation>
    <scope>GENOME REANNOTATION</scope>
    <source>
        <strain>ATCC 204508 / S288c</strain>
    </source>
</reference>
<reference key="7">
    <citation type="journal article" date="1996" name="J. Biol. Chem.">
        <title>In vitro activity of 1,3-beta-D-glucan synthase requires the GTP-binding protein Rho1.</title>
        <authorList>
            <person name="Mazur P."/>
            <person name="Baginsky W."/>
        </authorList>
    </citation>
    <scope>ACTIVATION BY RHO1</scope>
</reference>
<reference key="8">
    <citation type="journal article" date="2004" name="Genetics">
        <title>Analysis of beta-1,3-glucan assembly in Saccharomyces cerevisiae using a synthetic interaction network and altered sensitivity to caspofungin.</title>
        <authorList>
            <person name="Lesage G."/>
            <person name="Sdicu A.-M."/>
            <person name="Menard P."/>
            <person name="Shapiro J."/>
            <person name="Hussein S."/>
            <person name="Bussey H."/>
        </authorList>
    </citation>
    <scope>CASPOFUNGIN RESISTANCE</scope>
</reference>
<reference key="9">
    <citation type="journal article" date="2005" name="Proc. Natl. Acad. Sci. U.S.A.">
        <title>The Smk1p MAP kinase negatively regulates Gsc2p, a 1,3-beta-glucan synthase, during spore wall morphogenesis in Saccharomyces cerevisiae.</title>
        <authorList>
            <person name="Huang L.S."/>
            <person name="Doherty H.K."/>
            <person name="Herskowitz I."/>
        </authorList>
    </citation>
    <scope>IDENTIFICATION BY MASS SPECTROMETRY</scope>
    <scope>INTERACTION WITH SMK1</scope>
    <scope>ENZYME ACTIVITY</scope>
</reference>
<reference key="10">
    <citation type="journal article" date="2006" name="Proc. Natl. Acad. Sci. U.S.A.">
        <title>A global topology map of the Saccharomyces cerevisiae membrane proteome.</title>
        <authorList>
            <person name="Kim H."/>
            <person name="Melen K."/>
            <person name="Oesterberg M."/>
            <person name="von Heijne G."/>
        </authorList>
    </citation>
    <scope>TOPOLOGY [LARGE SCALE ANALYSIS]</scope>
    <source>
        <strain>ATCC 208353 / W303-1A</strain>
    </source>
</reference>
<reference key="11">
    <citation type="journal article" date="2007" name="Eukaryot. Cell">
        <title>Homologous subunits of 1,3-beta-glucan synthase are important for spore wall assembly in Saccharomyces cerevisiae.</title>
        <authorList>
            <person name="Ishihara S."/>
            <person name="Hirata A."/>
            <person name="Nogami S."/>
            <person name="Beauvais A."/>
            <person name="Latge J.-P."/>
            <person name="Ohya Y."/>
        </authorList>
    </citation>
    <scope>FUNCTION</scope>
    <scope>ENZYME ACTIVITY</scope>
</reference>
<proteinExistence type="evidence at protein level"/>
<protein>
    <recommendedName>
        <fullName evidence="8">1,3-beta-glucan synthase component GSC2</fullName>
        <ecNumber evidence="4 6">2.4.1.34</ecNumber>
    </recommendedName>
    <alternativeName>
        <fullName>1,3-beta-D-glucan-UDP glucosyltransferase</fullName>
    </alternativeName>
    <alternativeName>
        <fullName>FK506 sensitivity protein 2</fullName>
    </alternativeName>
    <alternativeName>
        <fullName>Glucan synthase of cerevisiae protein 2</fullName>
    </alternativeName>
</protein>